<evidence type="ECO:0000250" key="1">
    <source>
        <dbReference type="UniProtKB" id="Q16576"/>
    </source>
</evidence>
<evidence type="ECO:0000269" key="2">
    <source>
    </source>
</evidence>
<evidence type="ECO:0000305" key="3"/>
<sequence length="424" mass="47703">MASKEVLEDTVEERVISEEYKIWKKNTPFLYDLVMTHALEWPSLTVQWLPDVSRPEGKDYALHWLVLGTHTSDEQNHLVVARVQIPNDDQFDTSQYDSEKGEFGGFGSVTGKIETEIKINHEGEVNRARYMPQNPYIIATKTPSADVLVFDYTKHPSKPDPSGECNPDLRLRGHQKEGYGLSWNSNLKGHLLSASDDHTVCLWDISAGPKEGKIVDAKAIFTGHSAVVEDVAWHLLHESLFGSVADDQKLMIWDTRSNTTSKPSHSVDAHTAEVNCLSFNPYSEFILATGSADKTVALWDLRNLKLKLHSFESHKDEIFQVHWSPHNETILASSGTDRRLNVWDLSKIGEEQSAEDAEDGPPELLFIHGGHTAKISDFSWNPNEPWVICSVSEDNIMQIWQMAENIYNDEEPDIAAAELEGQGT</sequence>
<comment type="function">
    <text evidence="1">Core histone-binding subunit that may target chromatin remodeling factors, histone acetyltransferases and histone deacetylases to their histone substrates in a manner that is regulated by nucleosomal DNA. Component of several complexes which regulate chromatin metabolism.</text>
</comment>
<comment type="subunit">
    <text evidence="2">Binds directly to helix 1 of the histone fold of histone H4, a region that is not accessible when H4 is in chromatin. Also interacts with histone H2B and HAT1.</text>
</comment>
<comment type="subcellular location">
    <subcellularLocation>
        <location evidence="1">Nucleus</location>
    </subcellularLocation>
</comment>
<comment type="similarity">
    <text evidence="3">Belongs to the WD repeat RBAP46/RBAP48/MSI1 family.</text>
</comment>
<reference key="1">
    <citation type="journal article" date="2000" name="Biochem. Biophys. Res. Commun.">
        <title>Distinct regions of the chicken p46 polypeptide are required for its in vitro interaction with histones H2B and H4 and histone acetyltransferase-1.</title>
        <authorList>
            <person name="Ahmad A."/>
            <person name="Takami Y."/>
            <person name="Nakayama T."/>
        </authorList>
    </citation>
    <scope>NUCLEOTIDE SEQUENCE [MRNA]</scope>
    <scope>INTERACTION WITH H2B; H4 AND HAT1</scope>
</reference>
<feature type="chain" id="PRO_0000223246" description="Histone-binding protein RBBP7">
    <location>
        <begin position="1"/>
        <end position="424"/>
    </location>
</feature>
<feature type="repeat" description="WD 1">
    <location>
        <begin position="47"/>
        <end position="121"/>
    </location>
</feature>
<feature type="repeat" description="WD 2">
    <location>
        <begin position="127"/>
        <end position="172"/>
    </location>
</feature>
<feature type="repeat" description="WD 3">
    <location>
        <begin position="180"/>
        <end position="216"/>
    </location>
</feature>
<feature type="repeat" description="WD 4">
    <location>
        <begin position="227"/>
        <end position="268"/>
    </location>
</feature>
<feature type="repeat" description="WD 5">
    <location>
        <begin position="274"/>
        <end position="311"/>
    </location>
</feature>
<feature type="repeat" description="WD 6">
    <location>
        <begin position="317"/>
        <end position="368"/>
    </location>
</feature>
<feature type="repeat" description="WD 7">
    <location>
        <begin position="375"/>
        <end position="402"/>
    </location>
</feature>
<feature type="region of interest" description="Interaction with HAT1" evidence="2">
    <location>
        <begin position="359"/>
        <end position="404"/>
    </location>
</feature>
<organism>
    <name type="scientific">Gallus gallus</name>
    <name type="common">Chicken</name>
    <dbReference type="NCBI Taxonomy" id="9031"/>
    <lineage>
        <taxon>Eukaryota</taxon>
        <taxon>Metazoa</taxon>
        <taxon>Chordata</taxon>
        <taxon>Craniata</taxon>
        <taxon>Vertebrata</taxon>
        <taxon>Euteleostomi</taxon>
        <taxon>Archelosauria</taxon>
        <taxon>Archosauria</taxon>
        <taxon>Dinosauria</taxon>
        <taxon>Saurischia</taxon>
        <taxon>Theropoda</taxon>
        <taxon>Coelurosauria</taxon>
        <taxon>Aves</taxon>
        <taxon>Neognathae</taxon>
        <taxon>Galloanserae</taxon>
        <taxon>Galliformes</taxon>
        <taxon>Phasianidae</taxon>
        <taxon>Phasianinae</taxon>
        <taxon>Gallus</taxon>
    </lineage>
</organism>
<dbReference type="EMBL" id="AF279275">
    <property type="protein sequence ID" value="AAF87775.1"/>
    <property type="molecule type" value="mRNA"/>
</dbReference>
<dbReference type="PIR" id="JC7558">
    <property type="entry name" value="JC7558"/>
</dbReference>
<dbReference type="RefSeq" id="NP_990001.1">
    <property type="nucleotide sequence ID" value="NM_204670.2"/>
</dbReference>
<dbReference type="SMR" id="Q9I8G9"/>
<dbReference type="FunCoup" id="Q9I8G9">
    <property type="interactions" value="2276"/>
</dbReference>
<dbReference type="STRING" id="9031.ENSGALP00000026647"/>
<dbReference type="PaxDb" id="9031-ENSGALP00000026647"/>
<dbReference type="Ensembl" id="ENSGALT00000155195">
    <property type="protein sequence ID" value="ENSGALP00000076539"/>
    <property type="gene ID" value="ENSGALG00000016546"/>
</dbReference>
<dbReference type="Ensembl" id="ENSGALT00010005509.1">
    <property type="protein sequence ID" value="ENSGALP00010003348.1"/>
    <property type="gene ID" value="ENSGALG00010002400.1"/>
</dbReference>
<dbReference type="GeneID" id="395390"/>
<dbReference type="KEGG" id="gga:395390"/>
<dbReference type="CTD" id="5931"/>
<dbReference type="VEuPathDB" id="HostDB:geneid_395390"/>
<dbReference type="eggNOG" id="KOG0264">
    <property type="taxonomic scope" value="Eukaryota"/>
</dbReference>
<dbReference type="GeneTree" id="ENSGT00940000154748"/>
<dbReference type="HOGENOM" id="CLU_020445_3_1_1"/>
<dbReference type="InParanoid" id="Q9I8G9"/>
<dbReference type="OMA" id="KIRAMPA"/>
<dbReference type="OrthoDB" id="427795at2759"/>
<dbReference type="PhylomeDB" id="Q9I8G9"/>
<dbReference type="TreeFam" id="TF106485"/>
<dbReference type="PRO" id="PR:Q9I8G9"/>
<dbReference type="Proteomes" id="UP000000539">
    <property type="component" value="Chromosome 1"/>
</dbReference>
<dbReference type="GO" id="GO:0000781">
    <property type="term" value="C:chromosome, telomeric region"/>
    <property type="evidence" value="ECO:0007669"/>
    <property type="project" value="Ensembl"/>
</dbReference>
<dbReference type="GO" id="GO:0005829">
    <property type="term" value="C:cytosol"/>
    <property type="evidence" value="ECO:0007669"/>
    <property type="project" value="Ensembl"/>
</dbReference>
<dbReference type="GO" id="GO:0035098">
    <property type="term" value="C:ESC/E(Z) complex"/>
    <property type="evidence" value="ECO:0000250"/>
    <property type="project" value="UniProtKB"/>
</dbReference>
<dbReference type="GO" id="GO:0005634">
    <property type="term" value="C:nucleus"/>
    <property type="evidence" value="ECO:0000250"/>
    <property type="project" value="UniProtKB"/>
</dbReference>
<dbReference type="GO" id="GO:0016581">
    <property type="term" value="C:NuRD complex"/>
    <property type="evidence" value="ECO:0000250"/>
    <property type="project" value="UniProtKB"/>
</dbReference>
<dbReference type="GO" id="GO:0016589">
    <property type="term" value="C:NURF complex"/>
    <property type="evidence" value="ECO:0007669"/>
    <property type="project" value="Ensembl"/>
</dbReference>
<dbReference type="GO" id="GO:0042393">
    <property type="term" value="F:histone binding"/>
    <property type="evidence" value="ECO:0007669"/>
    <property type="project" value="Ensembl"/>
</dbReference>
<dbReference type="GO" id="GO:0003723">
    <property type="term" value="F:RNA binding"/>
    <property type="evidence" value="ECO:0007669"/>
    <property type="project" value="Ensembl"/>
</dbReference>
<dbReference type="GO" id="GO:0070370">
    <property type="term" value="P:cellular heat acclimation"/>
    <property type="evidence" value="ECO:0007669"/>
    <property type="project" value="Ensembl"/>
</dbReference>
<dbReference type="GO" id="GO:0006338">
    <property type="term" value="P:chromatin remodeling"/>
    <property type="evidence" value="ECO:0007669"/>
    <property type="project" value="Ensembl"/>
</dbReference>
<dbReference type="GO" id="GO:0006260">
    <property type="term" value="P:DNA replication"/>
    <property type="evidence" value="ECO:0007669"/>
    <property type="project" value="UniProtKB-KW"/>
</dbReference>
<dbReference type="GO" id="GO:0030308">
    <property type="term" value="P:negative regulation of cell growth"/>
    <property type="evidence" value="ECO:0007669"/>
    <property type="project" value="Ensembl"/>
</dbReference>
<dbReference type="GO" id="GO:0045892">
    <property type="term" value="P:negative regulation of DNA-templated transcription"/>
    <property type="evidence" value="ECO:0000250"/>
    <property type="project" value="AgBase"/>
</dbReference>
<dbReference type="GO" id="GO:0000122">
    <property type="term" value="P:negative regulation of transcription by RNA polymerase II"/>
    <property type="evidence" value="ECO:0000250"/>
    <property type="project" value="AgBase"/>
</dbReference>
<dbReference type="FunFam" id="2.130.10.10:FF:000021">
    <property type="entry name" value="histone-binding protein RBBP4 isoform X1"/>
    <property type="match status" value="1"/>
</dbReference>
<dbReference type="Gene3D" id="2.130.10.10">
    <property type="entry name" value="YVTN repeat-like/Quinoprotein amine dehydrogenase"/>
    <property type="match status" value="1"/>
</dbReference>
<dbReference type="InterPro" id="IPR020472">
    <property type="entry name" value="G-protein_beta_WD-40_rep"/>
</dbReference>
<dbReference type="InterPro" id="IPR022052">
    <property type="entry name" value="Histone-bd_RBBP4-like_N"/>
</dbReference>
<dbReference type="InterPro" id="IPR015943">
    <property type="entry name" value="WD40/YVTN_repeat-like_dom_sf"/>
</dbReference>
<dbReference type="InterPro" id="IPR019775">
    <property type="entry name" value="WD40_repeat_CS"/>
</dbReference>
<dbReference type="InterPro" id="IPR036322">
    <property type="entry name" value="WD40_repeat_dom_sf"/>
</dbReference>
<dbReference type="InterPro" id="IPR001680">
    <property type="entry name" value="WD40_rpt"/>
</dbReference>
<dbReference type="InterPro" id="IPR050459">
    <property type="entry name" value="WD_repeat_RBAP46/RBAP48/MSI1"/>
</dbReference>
<dbReference type="PANTHER" id="PTHR22850">
    <property type="entry name" value="WD40 REPEAT FAMILY"/>
    <property type="match status" value="1"/>
</dbReference>
<dbReference type="Pfam" id="PF12265">
    <property type="entry name" value="CAF1C_H4-bd"/>
    <property type="match status" value="1"/>
</dbReference>
<dbReference type="Pfam" id="PF00400">
    <property type="entry name" value="WD40"/>
    <property type="match status" value="5"/>
</dbReference>
<dbReference type="PRINTS" id="PR00320">
    <property type="entry name" value="GPROTEINBRPT"/>
</dbReference>
<dbReference type="SMART" id="SM00320">
    <property type="entry name" value="WD40"/>
    <property type="match status" value="6"/>
</dbReference>
<dbReference type="SUPFAM" id="SSF50978">
    <property type="entry name" value="WD40 repeat-like"/>
    <property type="match status" value="1"/>
</dbReference>
<dbReference type="PROSITE" id="PS00678">
    <property type="entry name" value="WD_REPEATS_1"/>
    <property type="match status" value="3"/>
</dbReference>
<dbReference type="PROSITE" id="PS50082">
    <property type="entry name" value="WD_REPEATS_2"/>
    <property type="match status" value="5"/>
</dbReference>
<dbReference type="PROSITE" id="PS50294">
    <property type="entry name" value="WD_REPEATS_REGION"/>
    <property type="match status" value="1"/>
</dbReference>
<gene>
    <name type="primary">RBBP7</name>
    <name type="synonym">RBAP46</name>
</gene>
<keyword id="KW-0143">Chaperone</keyword>
<keyword id="KW-0156">Chromatin regulator</keyword>
<keyword id="KW-0235">DNA replication</keyword>
<keyword id="KW-0539">Nucleus</keyword>
<keyword id="KW-1185">Reference proteome</keyword>
<keyword id="KW-0677">Repeat</keyword>
<keyword id="KW-0678">Repressor</keyword>
<keyword id="KW-0804">Transcription</keyword>
<keyword id="KW-0805">Transcription regulation</keyword>
<keyword id="KW-0853">WD repeat</keyword>
<name>RBBP7_CHICK</name>
<proteinExistence type="evidence at protein level"/>
<protein>
    <recommendedName>
        <fullName>Histone-binding protein RBBP7</fullName>
    </recommendedName>
    <alternativeName>
        <fullName>Retinoblastoma-binding protein 7</fullName>
        <shortName>RBBP-7</shortName>
    </alternativeName>
    <alternativeName>
        <fullName>Retinoblastoma-binding protein p46</fullName>
    </alternativeName>
</protein>
<accession>Q9I8G9</accession>